<evidence type="ECO:0000250" key="1">
    <source>
        <dbReference type="UniProtKB" id="A3SLM3"/>
    </source>
</evidence>
<evidence type="ECO:0000269" key="2">
    <source>
    </source>
</evidence>
<evidence type="ECO:0000303" key="3">
    <source>
    </source>
</evidence>
<evidence type="ECO:0000305" key="4"/>
<evidence type="ECO:0000312" key="5">
    <source>
        <dbReference type="EMBL" id="ADZ93293.1"/>
    </source>
</evidence>
<organism>
    <name type="scientific">Marinomonas mediterranea (strain ATCC 700492 / JCM 21426 / NBRC 103028 / MMB-1)</name>
    <dbReference type="NCBI Taxonomy" id="717774"/>
    <lineage>
        <taxon>Bacteria</taxon>
        <taxon>Pseudomonadati</taxon>
        <taxon>Pseudomonadota</taxon>
        <taxon>Gammaproteobacteria</taxon>
        <taxon>Oceanospirillales</taxon>
        <taxon>Oceanospirillaceae</taxon>
        <taxon>Marinomonas</taxon>
    </lineage>
</organism>
<reference key="1">
    <citation type="journal article" date="2012" name="Stand. Genomic Sci.">
        <title>Complete genome sequence of the melanogenic marine bacterium Marinomonas mediterranea type strain (MMB-1(T)).</title>
        <authorList>
            <person name="Lucas-Elio P."/>
            <person name="Goodwin L."/>
            <person name="Woyke T."/>
            <person name="Pitluck S."/>
            <person name="Nolan M."/>
            <person name="Kyrpides N.C."/>
            <person name="Detter J.C."/>
            <person name="Copeland A."/>
            <person name="Teshima H."/>
            <person name="Bruce D."/>
            <person name="Detter C."/>
            <person name="Tapia R."/>
            <person name="Han S."/>
            <person name="Land M.L."/>
            <person name="Ivanova N."/>
            <person name="Mikhailova N."/>
            <person name="Johnston A.W."/>
            <person name="Sanchez-Amat A."/>
        </authorList>
    </citation>
    <scope>NUCLEOTIDE SEQUENCE [LARGE SCALE GENOMIC DNA]</scope>
    <source>
        <strain>ATCC 700492 / JCM 21426 / NBRC 103028 / MMB-1</strain>
    </source>
</reference>
<reference key="2">
    <citation type="journal article" date="2014" name="ACS Chem. Biol.">
        <title>Enzymatic synthesis of polybrominated dioxins from the marine environment.</title>
        <authorList>
            <person name="Agarwal V."/>
            <person name="Moore B.S."/>
        </authorList>
    </citation>
    <scope>FUNCTION</scope>
    <scope>CATALYTIC ACTIVITY</scope>
    <source>
        <strain>ATCC 700492 / JCM 21426 / NBRC 103028 / MMB-1</strain>
    </source>
</reference>
<name>BMP5_MARM1</name>
<feature type="chain" id="PRO_0000459988" description="4-hydroxybenzoate brominase (decarboxylating)">
    <location>
        <begin position="1"/>
        <end position="516"/>
    </location>
</feature>
<feature type="binding site" evidence="1">
    <location>
        <position position="13"/>
    </location>
    <ligand>
        <name>FAD</name>
        <dbReference type="ChEBI" id="CHEBI:57692"/>
    </ligand>
</feature>
<feature type="binding site" evidence="1">
    <location>
        <position position="32"/>
    </location>
    <ligand>
        <name>FAD</name>
        <dbReference type="ChEBI" id="CHEBI:57692"/>
    </ligand>
</feature>
<feature type="binding site" evidence="1">
    <location>
        <position position="40"/>
    </location>
    <ligand>
        <name>FAD</name>
        <dbReference type="ChEBI" id="CHEBI:57692"/>
    </ligand>
</feature>
<feature type="binding site" evidence="1">
    <location>
        <position position="41"/>
    </location>
    <ligand>
        <name>FAD</name>
        <dbReference type="ChEBI" id="CHEBI:57692"/>
    </ligand>
</feature>
<feature type="binding site" evidence="1">
    <location>
        <position position="51"/>
    </location>
    <ligand>
        <name>FAD</name>
        <dbReference type="ChEBI" id="CHEBI:57692"/>
    </ligand>
</feature>
<feature type="binding site" evidence="1">
    <location>
        <position position="102"/>
    </location>
    <ligand>
        <name>FAD</name>
        <dbReference type="ChEBI" id="CHEBI:57692"/>
    </ligand>
</feature>
<feature type="binding site" evidence="1">
    <location>
        <position position="365"/>
    </location>
    <ligand>
        <name>FAD</name>
        <dbReference type="ChEBI" id="CHEBI:57692"/>
    </ligand>
</feature>
<protein>
    <recommendedName>
        <fullName evidence="4">4-hydroxybenzoate brominase (decarboxylating)</fullName>
        <ecNumber evidence="2">1.14.19.55</ecNumber>
    </recommendedName>
    <alternativeName>
        <fullName evidence="3">Decarboxylating-brominase flavoenzyme Bmp5</fullName>
    </alternativeName>
</protein>
<sequence length="516" mass="58948">MKKRIAIIGAGLSGIAAIKQLTDEGHHVVCYEKAESFGGVFAAKKIYEDLHLTISNYFMAYSDFLPTEQSLKFWSKQEYVQYLKRYLAHFDIEKHIVYNHKVVNAEQNGDKWTVKVQSGSGEETESEFDMVVVCSGHFQEPKTPDLEGLSDFMGDIIHSNDYRDKMAFKGKRVMCVGLGESSADITSEISEVAEKCILSLRRYPAVAPRYMAFQEDPYFTIDTSWLTSRIVNKLPFSYHRGITKNIFHKYVNSRNLHLRIRGEWLHKSGPSIHQAVTKNERLFKPIAEGKVLPNIGGIERFEGNTVIFKDGTHEEIDAIVFCTGYKLSFPFLQHKIECMRDLYKQIFIPSVGSSLAFVGFVRPQQGGIPVIAEMQSRYLAQLASGVKSLPSLEKQKEVIMEDANHWETEYHITPHVASLVNYCHYMDSMARLVGCMPKTPSLLKDPLLRVKLLHNPQFAAQYRLEGPHPMSESSRDFLVNFPNISTWPRIIHFECALAMQKLLSFLSMDNLRELKK</sequence>
<comment type="function">
    <text evidence="2">Brominase involved in the biosynthesis of polybrominated aromatic organic compounds (PubMed:25061970). Catalyzes the bromination of 4-hydroxybenzoate (4-HBA) to 3-bromo-4-hydroxybenzoate, followed by bromination and decarboxylation of 3-bromo-4-hydroxybenzoate to 2,4-dibromophenol (PubMed:25061970). Can also use 3,4-dihydroxybenzoate, with lower efficiency, forming 3-bromo-4,5-dihydroxybenzoate and 3,5-dibromobenzene-1,2-diol (PubMed:25061970).</text>
</comment>
<comment type="catalytic activity">
    <reaction evidence="2">
        <text>2 bromide + 4-hydroxybenzoate + 2 NADPH + 2 O2 + 5 H(+) = 2,4-dibromophenol + CO2 + 2 NADP(+) + 4 H2O</text>
        <dbReference type="Rhea" id="RHEA:56348"/>
        <dbReference type="ChEBI" id="CHEBI:15377"/>
        <dbReference type="ChEBI" id="CHEBI:15378"/>
        <dbReference type="ChEBI" id="CHEBI:15379"/>
        <dbReference type="ChEBI" id="CHEBI:15858"/>
        <dbReference type="ChEBI" id="CHEBI:16526"/>
        <dbReference type="ChEBI" id="CHEBI:17879"/>
        <dbReference type="ChEBI" id="CHEBI:34238"/>
        <dbReference type="ChEBI" id="CHEBI:57783"/>
        <dbReference type="ChEBI" id="CHEBI:58349"/>
        <dbReference type="EC" id="1.14.19.55"/>
    </reaction>
    <physiologicalReaction direction="left-to-right" evidence="2">
        <dbReference type="Rhea" id="RHEA:56349"/>
    </physiologicalReaction>
</comment>
<comment type="catalytic activity">
    <reaction evidence="2">
        <text>bromide + 4-hydroxybenzoate + NADPH + O2 + 2 H(+) = 3-bromo-4-hydroxybenzoate + NADP(+) + 2 H2O</text>
        <dbReference type="Rhea" id="RHEA:56352"/>
        <dbReference type="ChEBI" id="CHEBI:15377"/>
        <dbReference type="ChEBI" id="CHEBI:15378"/>
        <dbReference type="ChEBI" id="CHEBI:15379"/>
        <dbReference type="ChEBI" id="CHEBI:15858"/>
        <dbReference type="ChEBI" id="CHEBI:17879"/>
        <dbReference type="ChEBI" id="CHEBI:57783"/>
        <dbReference type="ChEBI" id="CHEBI:58349"/>
        <dbReference type="ChEBI" id="CHEBI:140203"/>
    </reaction>
    <physiologicalReaction direction="left-to-right" evidence="2">
        <dbReference type="Rhea" id="RHEA:56353"/>
    </physiologicalReaction>
</comment>
<comment type="catalytic activity">
    <reaction evidence="2">
        <text>3-bromo-4-hydroxybenzoate + bromide + NADPH + O2 + 3 H(+) = 2,4-dibromophenol + CO2 + NADP(+) + 2 H2O</text>
        <dbReference type="Rhea" id="RHEA:56356"/>
        <dbReference type="ChEBI" id="CHEBI:15377"/>
        <dbReference type="ChEBI" id="CHEBI:15378"/>
        <dbReference type="ChEBI" id="CHEBI:15379"/>
        <dbReference type="ChEBI" id="CHEBI:15858"/>
        <dbReference type="ChEBI" id="CHEBI:16526"/>
        <dbReference type="ChEBI" id="CHEBI:34238"/>
        <dbReference type="ChEBI" id="CHEBI:57783"/>
        <dbReference type="ChEBI" id="CHEBI:58349"/>
        <dbReference type="ChEBI" id="CHEBI:140203"/>
    </reaction>
    <physiologicalReaction direction="left-to-right" evidence="2">
        <dbReference type="Rhea" id="RHEA:56357"/>
    </physiologicalReaction>
</comment>
<comment type="catalytic activity">
    <reaction evidence="2">
        <text>3,4-dihydroxybenzoate + 2 bromide + 2 NADPH + 2 O2 + 5 H(+) = 3,5-dibromobenzene-1,2-diol + CO2 + 2 NADP(+) + 4 H2O</text>
        <dbReference type="Rhea" id="RHEA:56368"/>
        <dbReference type="ChEBI" id="CHEBI:15377"/>
        <dbReference type="ChEBI" id="CHEBI:15378"/>
        <dbReference type="ChEBI" id="CHEBI:15379"/>
        <dbReference type="ChEBI" id="CHEBI:15858"/>
        <dbReference type="ChEBI" id="CHEBI:16526"/>
        <dbReference type="ChEBI" id="CHEBI:36241"/>
        <dbReference type="ChEBI" id="CHEBI:57783"/>
        <dbReference type="ChEBI" id="CHEBI:58349"/>
        <dbReference type="ChEBI" id="CHEBI:140214"/>
        <dbReference type="EC" id="1.14.19.55"/>
    </reaction>
    <physiologicalReaction direction="left-to-right" evidence="2">
        <dbReference type="Rhea" id="RHEA:56369"/>
    </physiologicalReaction>
</comment>
<comment type="catalytic activity">
    <reaction evidence="2">
        <text>3,4-dihydroxybenzoate + bromide + NADPH + O2 + 2 H(+) = 3-bromo-4,5-dihydroxybenzoate + NADP(+) + 2 H2O</text>
        <dbReference type="Rhea" id="RHEA:56372"/>
        <dbReference type="ChEBI" id="CHEBI:15377"/>
        <dbReference type="ChEBI" id="CHEBI:15378"/>
        <dbReference type="ChEBI" id="CHEBI:15379"/>
        <dbReference type="ChEBI" id="CHEBI:15858"/>
        <dbReference type="ChEBI" id="CHEBI:36241"/>
        <dbReference type="ChEBI" id="CHEBI:57783"/>
        <dbReference type="ChEBI" id="CHEBI:58349"/>
        <dbReference type="ChEBI" id="CHEBI:140211"/>
    </reaction>
    <physiologicalReaction direction="left-to-right" evidence="2">
        <dbReference type="Rhea" id="RHEA:56373"/>
    </physiologicalReaction>
</comment>
<comment type="catalytic activity">
    <reaction evidence="2">
        <text>3-bromo-4,5-dihydroxybenzoate + bromide + NADPH + O2 + 3 H(+) = 3,5-dibromobenzene-1,2-diol + CO2 + NADP(+) + 2 H2O</text>
        <dbReference type="Rhea" id="RHEA:56376"/>
        <dbReference type="ChEBI" id="CHEBI:15377"/>
        <dbReference type="ChEBI" id="CHEBI:15378"/>
        <dbReference type="ChEBI" id="CHEBI:15379"/>
        <dbReference type="ChEBI" id="CHEBI:15858"/>
        <dbReference type="ChEBI" id="CHEBI:16526"/>
        <dbReference type="ChEBI" id="CHEBI:57783"/>
        <dbReference type="ChEBI" id="CHEBI:58349"/>
        <dbReference type="ChEBI" id="CHEBI:140211"/>
        <dbReference type="ChEBI" id="CHEBI:140214"/>
    </reaction>
    <physiologicalReaction direction="left-to-right" evidence="2">
        <dbReference type="Rhea" id="RHEA:56377"/>
    </physiologicalReaction>
</comment>
<comment type="cofactor">
    <cofactor evidence="1">
        <name>FAD</name>
        <dbReference type="ChEBI" id="CHEBI:57692"/>
    </cofactor>
</comment>
<comment type="similarity">
    <text evidence="4">Belongs to the FMO family.</text>
</comment>
<keyword id="KW-0274">FAD</keyword>
<keyword id="KW-0285">Flavoprotein</keyword>
<keyword id="KW-0521">NADP</keyword>
<keyword id="KW-0560">Oxidoreductase</keyword>
<keyword id="KW-1185">Reference proteome</keyword>
<proteinExistence type="evidence at protein level"/>
<dbReference type="EC" id="1.14.19.55" evidence="2"/>
<dbReference type="EMBL" id="CP002583">
    <property type="protein sequence ID" value="ADZ93293.1"/>
    <property type="molecule type" value="Genomic_DNA"/>
</dbReference>
<dbReference type="RefSeq" id="WP_013663195.1">
    <property type="nucleotide sequence ID" value="NC_015276.1"/>
</dbReference>
<dbReference type="SMR" id="F2K079"/>
<dbReference type="STRING" id="717774.Marme_4093"/>
<dbReference type="KEGG" id="mme:Marme_4093"/>
<dbReference type="PATRIC" id="fig|717774.3.peg.4236"/>
<dbReference type="eggNOG" id="COG2072">
    <property type="taxonomic scope" value="Bacteria"/>
</dbReference>
<dbReference type="HOGENOM" id="CLU_006909_8_2_6"/>
<dbReference type="OrthoDB" id="9790219at2"/>
<dbReference type="BioCyc" id="MetaCyc:MONOMER-20326"/>
<dbReference type="Proteomes" id="UP000001062">
    <property type="component" value="Chromosome"/>
</dbReference>
<dbReference type="GO" id="GO:0050660">
    <property type="term" value="F:flavin adenine dinucleotide binding"/>
    <property type="evidence" value="ECO:0007669"/>
    <property type="project" value="InterPro"/>
</dbReference>
<dbReference type="GO" id="GO:0004499">
    <property type="term" value="F:N,N-dimethylaniline monooxygenase activity"/>
    <property type="evidence" value="ECO:0007669"/>
    <property type="project" value="InterPro"/>
</dbReference>
<dbReference type="GO" id="GO:0050661">
    <property type="term" value="F:NADP binding"/>
    <property type="evidence" value="ECO:0007669"/>
    <property type="project" value="InterPro"/>
</dbReference>
<dbReference type="FunFam" id="3.50.50.60:FF:000023">
    <property type="entry name" value="Dimethylaniline monooxygenase [N-oxide-forming]"/>
    <property type="match status" value="1"/>
</dbReference>
<dbReference type="Gene3D" id="3.50.50.60">
    <property type="entry name" value="FAD/NAD(P)-binding domain"/>
    <property type="match status" value="4"/>
</dbReference>
<dbReference type="InterPro" id="IPR036188">
    <property type="entry name" value="FAD/NAD-bd_sf"/>
</dbReference>
<dbReference type="InterPro" id="IPR000960">
    <property type="entry name" value="Flavin_mOase"/>
</dbReference>
<dbReference type="InterPro" id="IPR020946">
    <property type="entry name" value="Flavin_mOase-like"/>
</dbReference>
<dbReference type="InterPro" id="IPR050346">
    <property type="entry name" value="FMO-like"/>
</dbReference>
<dbReference type="PANTHER" id="PTHR23023">
    <property type="entry name" value="DIMETHYLANILINE MONOOXYGENASE"/>
    <property type="match status" value="1"/>
</dbReference>
<dbReference type="Pfam" id="PF00743">
    <property type="entry name" value="FMO-like"/>
    <property type="match status" value="1"/>
</dbReference>
<dbReference type="PIRSF" id="PIRSF000332">
    <property type="entry name" value="FMO"/>
    <property type="match status" value="1"/>
</dbReference>
<dbReference type="PRINTS" id="PR00370">
    <property type="entry name" value="FMOXYGENASE"/>
</dbReference>
<dbReference type="SUPFAM" id="SSF51905">
    <property type="entry name" value="FAD/NAD(P)-binding domain"/>
    <property type="match status" value="2"/>
</dbReference>
<gene>
    <name evidence="3" type="primary">bmp5</name>
    <name evidence="5" type="ordered locus">Marme_4093</name>
</gene>
<accession>F2K079</accession>